<name>ATPA_STRP6</name>
<protein>
    <recommendedName>
        <fullName evidence="1">ATP synthase subunit alpha</fullName>
        <ecNumber evidence="1">7.1.2.2</ecNumber>
    </recommendedName>
    <alternativeName>
        <fullName evidence="1">ATP synthase F1 sector subunit alpha</fullName>
    </alternativeName>
    <alternativeName>
        <fullName evidence="1">F-ATPase subunit alpha</fullName>
    </alternativeName>
</protein>
<evidence type="ECO:0000255" key="1">
    <source>
        <dbReference type="HAMAP-Rule" id="MF_01346"/>
    </source>
</evidence>
<proteinExistence type="inferred from homology"/>
<feature type="chain" id="PRO_0000238370" description="ATP synthase subunit alpha">
    <location>
        <begin position="1"/>
        <end position="502"/>
    </location>
</feature>
<feature type="binding site" evidence="1">
    <location>
        <begin position="169"/>
        <end position="176"/>
    </location>
    <ligand>
        <name>ATP</name>
        <dbReference type="ChEBI" id="CHEBI:30616"/>
    </ligand>
</feature>
<feature type="site" description="Required for activity" evidence="1">
    <location>
        <position position="362"/>
    </location>
</feature>
<comment type="function">
    <text evidence="1">Produces ATP from ADP in the presence of a proton gradient across the membrane. The alpha chain is a regulatory subunit.</text>
</comment>
<comment type="catalytic activity">
    <reaction evidence="1">
        <text>ATP + H2O + 4 H(+)(in) = ADP + phosphate + 5 H(+)(out)</text>
        <dbReference type="Rhea" id="RHEA:57720"/>
        <dbReference type="ChEBI" id="CHEBI:15377"/>
        <dbReference type="ChEBI" id="CHEBI:15378"/>
        <dbReference type="ChEBI" id="CHEBI:30616"/>
        <dbReference type="ChEBI" id="CHEBI:43474"/>
        <dbReference type="ChEBI" id="CHEBI:456216"/>
        <dbReference type="EC" id="7.1.2.2"/>
    </reaction>
</comment>
<comment type="subunit">
    <text evidence="1">F-type ATPases have 2 components, CF(1) - the catalytic core - and CF(0) - the membrane proton channel. CF(1) has five subunits: alpha(3), beta(3), gamma(1), delta(1), epsilon(1). CF(0) has three main subunits: a(1), b(2) and c(9-12). The alpha and beta chains form an alternating ring which encloses part of the gamma chain. CF(1) is attached to CF(0) by a central stalk formed by the gamma and epsilon chains, while a peripheral stalk is formed by the delta and b chains.</text>
</comment>
<comment type="subcellular location">
    <subcellularLocation>
        <location evidence="1">Cell membrane</location>
        <topology evidence="1">Peripheral membrane protein</topology>
    </subcellularLocation>
</comment>
<comment type="similarity">
    <text evidence="1">Belongs to the ATPase alpha/beta chains family.</text>
</comment>
<accession>Q5XCY2</accession>
<reference key="1">
    <citation type="journal article" date="2004" name="J. Infect. Dis.">
        <title>Progress toward characterization of the group A Streptococcus metagenome: complete genome sequence of a macrolide-resistant serotype M6 strain.</title>
        <authorList>
            <person name="Banks D.J."/>
            <person name="Porcella S.F."/>
            <person name="Barbian K.D."/>
            <person name="Beres S.B."/>
            <person name="Philips L.E."/>
            <person name="Voyich J.M."/>
            <person name="DeLeo F.R."/>
            <person name="Martin J.M."/>
            <person name="Somerville G.A."/>
            <person name="Musser J.M."/>
        </authorList>
    </citation>
    <scope>NUCLEOTIDE SEQUENCE [LARGE SCALE GENOMIC DNA]</scope>
    <source>
        <strain>ATCC BAA-946 / MGAS10394</strain>
    </source>
</reference>
<dbReference type="EC" id="7.1.2.2" evidence="1"/>
<dbReference type="EMBL" id="CP000003">
    <property type="protein sequence ID" value="AAT86731.1"/>
    <property type="molecule type" value="Genomic_DNA"/>
</dbReference>
<dbReference type="RefSeq" id="WP_002985238.1">
    <property type="nucleotide sequence ID" value="NC_006086.1"/>
</dbReference>
<dbReference type="SMR" id="Q5XCY2"/>
<dbReference type="KEGG" id="spa:M6_Spy0596"/>
<dbReference type="HOGENOM" id="CLU_010091_2_1_9"/>
<dbReference type="Proteomes" id="UP000001167">
    <property type="component" value="Chromosome"/>
</dbReference>
<dbReference type="GO" id="GO:0005886">
    <property type="term" value="C:plasma membrane"/>
    <property type="evidence" value="ECO:0007669"/>
    <property type="project" value="UniProtKB-SubCell"/>
</dbReference>
<dbReference type="GO" id="GO:0045259">
    <property type="term" value="C:proton-transporting ATP synthase complex"/>
    <property type="evidence" value="ECO:0007669"/>
    <property type="project" value="UniProtKB-KW"/>
</dbReference>
<dbReference type="GO" id="GO:0043531">
    <property type="term" value="F:ADP binding"/>
    <property type="evidence" value="ECO:0007669"/>
    <property type="project" value="TreeGrafter"/>
</dbReference>
<dbReference type="GO" id="GO:0005524">
    <property type="term" value="F:ATP binding"/>
    <property type="evidence" value="ECO:0007669"/>
    <property type="project" value="UniProtKB-UniRule"/>
</dbReference>
<dbReference type="GO" id="GO:0046933">
    <property type="term" value="F:proton-transporting ATP synthase activity, rotational mechanism"/>
    <property type="evidence" value="ECO:0007669"/>
    <property type="project" value="UniProtKB-UniRule"/>
</dbReference>
<dbReference type="CDD" id="cd18113">
    <property type="entry name" value="ATP-synt_F1_alpha_C"/>
    <property type="match status" value="1"/>
</dbReference>
<dbReference type="CDD" id="cd18116">
    <property type="entry name" value="ATP-synt_F1_alpha_N"/>
    <property type="match status" value="1"/>
</dbReference>
<dbReference type="CDD" id="cd01132">
    <property type="entry name" value="F1-ATPase_alpha_CD"/>
    <property type="match status" value="1"/>
</dbReference>
<dbReference type="FunFam" id="1.20.150.20:FF:000001">
    <property type="entry name" value="ATP synthase subunit alpha"/>
    <property type="match status" value="1"/>
</dbReference>
<dbReference type="FunFam" id="2.40.30.20:FF:000001">
    <property type="entry name" value="ATP synthase subunit alpha"/>
    <property type="match status" value="1"/>
</dbReference>
<dbReference type="FunFam" id="3.40.50.300:FF:000002">
    <property type="entry name" value="ATP synthase subunit alpha"/>
    <property type="match status" value="1"/>
</dbReference>
<dbReference type="Gene3D" id="2.40.30.20">
    <property type="match status" value="1"/>
</dbReference>
<dbReference type="Gene3D" id="1.20.150.20">
    <property type="entry name" value="ATP synthase alpha/beta chain, C-terminal domain"/>
    <property type="match status" value="1"/>
</dbReference>
<dbReference type="Gene3D" id="3.40.50.300">
    <property type="entry name" value="P-loop containing nucleotide triphosphate hydrolases"/>
    <property type="match status" value="1"/>
</dbReference>
<dbReference type="HAMAP" id="MF_01346">
    <property type="entry name" value="ATP_synth_alpha_bact"/>
    <property type="match status" value="1"/>
</dbReference>
<dbReference type="InterPro" id="IPR023366">
    <property type="entry name" value="ATP_synth_asu-like_sf"/>
</dbReference>
<dbReference type="InterPro" id="IPR000793">
    <property type="entry name" value="ATP_synth_asu_C"/>
</dbReference>
<dbReference type="InterPro" id="IPR038376">
    <property type="entry name" value="ATP_synth_asu_C_sf"/>
</dbReference>
<dbReference type="InterPro" id="IPR033732">
    <property type="entry name" value="ATP_synth_F1_a_nt-bd_dom"/>
</dbReference>
<dbReference type="InterPro" id="IPR005294">
    <property type="entry name" value="ATP_synth_F1_asu"/>
</dbReference>
<dbReference type="InterPro" id="IPR004100">
    <property type="entry name" value="ATPase_F1/V1/A1_a/bsu_N"/>
</dbReference>
<dbReference type="InterPro" id="IPR036121">
    <property type="entry name" value="ATPase_F1/V1/A1_a/bsu_N_sf"/>
</dbReference>
<dbReference type="InterPro" id="IPR000194">
    <property type="entry name" value="ATPase_F1/V1/A1_a/bsu_nucl-bd"/>
</dbReference>
<dbReference type="InterPro" id="IPR027417">
    <property type="entry name" value="P-loop_NTPase"/>
</dbReference>
<dbReference type="NCBIfam" id="TIGR00962">
    <property type="entry name" value="atpA"/>
    <property type="match status" value="1"/>
</dbReference>
<dbReference type="NCBIfam" id="NF009884">
    <property type="entry name" value="PRK13343.1"/>
    <property type="match status" value="1"/>
</dbReference>
<dbReference type="PANTHER" id="PTHR48082">
    <property type="entry name" value="ATP SYNTHASE SUBUNIT ALPHA, MITOCHONDRIAL"/>
    <property type="match status" value="1"/>
</dbReference>
<dbReference type="PANTHER" id="PTHR48082:SF2">
    <property type="entry name" value="ATP SYNTHASE SUBUNIT ALPHA, MITOCHONDRIAL"/>
    <property type="match status" value="1"/>
</dbReference>
<dbReference type="Pfam" id="PF00006">
    <property type="entry name" value="ATP-synt_ab"/>
    <property type="match status" value="1"/>
</dbReference>
<dbReference type="Pfam" id="PF00306">
    <property type="entry name" value="ATP-synt_ab_C"/>
    <property type="match status" value="1"/>
</dbReference>
<dbReference type="Pfam" id="PF02874">
    <property type="entry name" value="ATP-synt_ab_N"/>
    <property type="match status" value="1"/>
</dbReference>
<dbReference type="PIRSF" id="PIRSF039088">
    <property type="entry name" value="F_ATPase_subunit_alpha"/>
    <property type="match status" value="1"/>
</dbReference>
<dbReference type="SUPFAM" id="SSF47917">
    <property type="entry name" value="C-terminal domain of alpha and beta subunits of F1 ATP synthase"/>
    <property type="match status" value="1"/>
</dbReference>
<dbReference type="SUPFAM" id="SSF50615">
    <property type="entry name" value="N-terminal domain of alpha and beta subunits of F1 ATP synthase"/>
    <property type="match status" value="1"/>
</dbReference>
<dbReference type="SUPFAM" id="SSF52540">
    <property type="entry name" value="P-loop containing nucleoside triphosphate hydrolases"/>
    <property type="match status" value="1"/>
</dbReference>
<organism>
    <name type="scientific">Streptococcus pyogenes serotype M6 (strain ATCC BAA-946 / MGAS10394)</name>
    <dbReference type="NCBI Taxonomy" id="286636"/>
    <lineage>
        <taxon>Bacteria</taxon>
        <taxon>Bacillati</taxon>
        <taxon>Bacillota</taxon>
        <taxon>Bacilli</taxon>
        <taxon>Lactobacillales</taxon>
        <taxon>Streptococcaceae</taxon>
        <taxon>Streptococcus</taxon>
    </lineage>
</organism>
<gene>
    <name evidence="1" type="primary">atpA</name>
    <name type="ordered locus">M6_Spy0596</name>
</gene>
<keyword id="KW-0066">ATP synthesis</keyword>
<keyword id="KW-0067">ATP-binding</keyword>
<keyword id="KW-1003">Cell membrane</keyword>
<keyword id="KW-0139">CF(1)</keyword>
<keyword id="KW-0375">Hydrogen ion transport</keyword>
<keyword id="KW-0406">Ion transport</keyword>
<keyword id="KW-0472">Membrane</keyword>
<keyword id="KW-0547">Nucleotide-binding</keyword>
<keyword id="KW-1278">Translocase</keyword>
<keyword id="KW-0813">Transport</keyword>
<sequence length="502" mass="54685">MAINAQEISALIKKQIENFQPNFDVTETGIVTYIGDGIARARGLDNAMSGELLEFENGAYGMAQNLESNDVGIIILGDFSAIREGDVVKRTGKIMEVPVGEALIGRVVNPLGQPVDGLGDIETTGFRPVETPAPGVMQRKSVSEPLQTGLKAIDALVPIGRGQRELIIGDRQTGKTSVAIDAILNQKGQDMICIYVAIGQKESTVRTQVETLRRYGALDYTIVVTASASQPSPLLFIAPYAGVAMAEEFMYQGKHVLIVYDDLSKQAVAYRELSLLLRRPPGREAYPGDVFYLHSRLLERSAKVSDDLGGGSITALPFIETQAGDISAYIATNVISITDGQIFLQENLFNSGIRPAIDAGSSVSRVGGSAQIKAMKKVAGTLRLDLASYRELEAFTQFGSDLDAATQAKLNRGRRTVEILKQPLHKPLPVEKQVVILYALTHGFLDDVPVDDILAFEEALYDYFDVHYNDLFETIRTTKDLPEEAALDAAIKAFKEHSNFKS</sequence>